<keyword id="KW-0694">RNA-binding</keyword>
<keyword id="KW-0804">Transcription</keyword>
<keyword id="KW-0889">Transcription antitermination</keyword>
<keyword id="KW-0805">Transcription regulation</keyword>
<accession>C3P7W1</accession>
<name>NUSB_BACAA</name>
<comment type="function">
    <text evidence="1">Involved in transcription antitermination. Required for transcription of ribosomal RNA (rRNA) genes. Binds specifically to the boxA antiterminator sequence of the ribosomal RNA (rrn) operons.</text>
</comment>
<comment type="similarity">
    <text evidence="1">Belongs to the NusB family.</text>
</comment>
<gene>
    <name evidence="1" type="primary">nusB</name>
    <name type="ordered locus">BAA_4423</name>
</gene>
<protein>
    <recommendedName>
        <fullName evidence="1">Transcription antitermination protein NusB</fullName>
    </recommendedName>
    <alternativeName>
        <fullName evidence="1">Antitermination factor NusB</fullName>
    </alternativeName>
</protein>
<reference key="1">
    <citation type="submission" date="2009-04" db="EMBL/GenBank/DDBJ databases">
        <title>Genome sequence of Bacillus anthracis A0248.</title>
        <authorList>
            <person name="Dodson R.J."/>
            <person name="Munk A.C."/>
            <person name="Bruce D."/>
            <person name="Detter C."/>
            <person name="Tapia R."/>
            <person name="Sutton G."/>
            <person name="Sims D."/>
            <person name="Brettin T."/>
        </authorList>
    </citation>
    <scope>NUCLEOTIDE SEQUENCE [LARGE SCALE GENOMIC DNA]</scope>
    <source>
        <strain>A0248</strain>
    </source>
</reference>
<organism>
    <name type="scientific">Bacillus anthracis (strain A0248)</name>
    <dbReference type="NCBI Taxonomy" id="592021"/>
    <lineage>
        <taxon>Bacteria</taxon>
        <taxon>Bacillati</taxon>
        <taxon>Bacillota</taxon>
        <taxon>Bacilli</taxon>
        <taxon>Bacillales</taxon>
        <taxon>Bacillaceae</taxon>
        <taxon>Bacillus</taxon>
        <taxon>Bacillus cereus group</taxon>
    </lineage>
</organism>
<evidence type="ECO:0000255" key="1">
    <source>
        <dbReference type="HAMAP-Rule" id="MF_00073"/>
    </source>
</evidence>
<proteinExistence type="inferred from homology"/>
<feature type="chain" id="PRO_1000118110" description="Transcription antitermination protein NusB">
    <location>
        <begin position="1"/>
        <end position="130"/>
    </location>
</feature>
<sequence>MKRRTARERAMQALYQMDITGELEPKVAVENTLDEGEETNEFLESLVVGFVENKEVIDEAIRQNLKKWKLERISIVDRSILRVAVYEMKYMEEIPHNVTINEAIEIAKTFGDEESRRFINGVLSNIKDTL</sequence>
<dbReference type="EMBL" id="CP001598">
    <property type="protein sequence ID" value="ACQ50335.1"/>
    <property type="molecule type" value="Genomic_DNA"/>
</dbReference>
<dbReference type="RefSeq" id="WP_000830249.1">
    <property type="nucleotide sequence ID" value="NC_012659.1"/>
</dbReference>
<dbReference type="SMR" id="C3P7W1"/>
<dbReference type="GeneID" id="93006920"/>
<dbReference type="KEGG" id="bai:BAA_4423"/>
<dbReference type="HOGENOM" id="CLU_087843_3_3_9"/>
<dbReference type="GO" id="GO:0005829">
    <property type="term" value="C:cytosol"/>
    <property type="evidence" value="ECO:0007669"/>
    <property type="project" value="TreeGrafter"/>
</dbReference>
<dbReference type="GO" id="GO:0003723">
    <property type="term" value="F:RNA binding"/>
    <property type="evidence" value="ECO:0007669"/>
    <property type="project" value="UniProtKB-UniRule"/>
</dbReference>
<dbReference type="GO" id="GO:0006353">
    <property type="term" value="P:DNA-templated transcription termination"/>
    <property type="evidence" value="ECO:0007669"/>
    <property type="project" value="UniProtKB-UniRule"/>
</dbReference>
<dbReference type="GO" id="GO:0031564">
    <property type="term" value="P:transcription antitermination"/>
    <property type="evidence" value="ECO:0007669"/>
    <property type="project" value="UniProtKB-KW"/>
</dbReference>
<dbReference type="CDD" id="cd00619">
    <property type="entry name" value="Terminator_NusB"/>
    <property type="match status" value="1"/>
</dbReference>
<dbReference type="FunFam" id="1.10.940.10:FF:000003">
    <property type="entry name" value="Transcription antitermination factor NusB"/>
    <property type="match status" value="1"/>
</dbReference>
<dbReference type="Gene3D" id="1.10.940.10">
    <property type="entry name" value="NusB-like"/>
    <property type="match status" value="1"/>
</dbReference>
<dbReference type="HAMAP" id="MF_00073">
    <property type="entry name" value="NusB"/>
    <property type="match status" value="1"/>
</dbReference>
<dbReference type="InterPro" id="IPR035926">
    <property type="entry name" value="NusB-like_sf"/>
</dbReference>
<dbReference type="InterPro" id="IPR011605">
    <property type="entry name" value="NusB_fam"/>
</dbReference>
<dbReference type="InterPro" id="IPR006027">
    <property type="entry name" value="NusB_RsmB_TIM44"/>
</dbReference>
<dbReference type="NCBIfam" id="TIGR01951">
    <property type="entry name" value="nusB"/>
    <property type="match status" value="1"/>
</dbReference>
<dbReference type="NCBIfam" id="NF001223">
    <property type="entry name" value="PRK00202.1-1"/>
    <property type="match status" value="1"/>
</dbReference>
<dbReference type="PANTHER" id="PTHR11078:SF3">
    <property type="entry name" value="ANTITERMINATION NUSB DOMAIN-CONTAINING PROTEIN"/>
    <property type="match status" value="1"/>
</dbReference>
<dbReference type="PANTHER" id="PTHR11078">
    <property type="entry name" value="N UTILIZATION SUBSTANCE PROTEIN B-RELATED"/>
    <property type="match status" value="1"/>
</dbReference>
<dbReference type="Pfam" id="PF01029">
    <property type="entry name" value="NusB"/>
    <property type="match status" value="1"/>
</dbReference>
<dbReference type="SUPFAM" id="SSF48013">
    <property type="entry name" value="NusB-like"/>
    <property type="match status" value="1"/>
</dbReference>